<name>PURA_METM6</name>
<feature type="chain" id="PRO_1000089312" description="Adenylosuccinate synthetase">
    <location>
        <begin position="1"/>
        <end position="337"/>
    </location>
</feature>
<feature type="active site" description="Proton acceptor" evidence="1">
    <location>
        <position position="13"/>
    </location>
</feature>
<feature type="active site" description="Proton donor" evidence="1">
    <location>
        <position position="43"/>
    </location>
</feature>
<feature type="binding site" evidence="1">
    <location>
        <begin position="12"/>
        <end position="18"/>
    </location>
    <ligand>
        <name>GTP</name>
        <dbReference type="ChEBI" id="CHEBI:37565"/>
    </ligand>
</feature>
<feature type="binding site" description="in other chain" evidence="1">
    <location>
        <begin position="13"/>
        <end position="16"/>
    </location>
    <ligand>
        <name>IMP</name>
        <dbReference type="ChEBI" id="CHEBI:58053"/>
        <note>ligand shared between dimeric partners</note>
    </ligand>
</feature>
<feature type="binding site" evidence="1">
    <location>
        <position position="13"/>
    </location>
    <ligand>
        <name>Mg(2+)</name>
        <dbReference type="ChEBI" id="CHEBI:18420"/>
    </ligand>
</feature>
<feature type="binding site" description="in other chain" evidence="1">
    <location>
        <begin position="40"/>
        <end position="43"/>
    </location>
    <ligand>
        <name>IMP</name>
        <dbReference type="ChEBI" id="CHEBI:58053"/>
        <note>ligand shared between dimeric partners</note>
    </ligand>
</feature>
<feature type="binding site" evidence="1">
    <location>
        <begin position="42"/>
        <end position="44"/>
    </location>
    <ligand>
        <name>GTP</name>
        <dbReference type="ChEBI" id="CHEBI:37565"/>
    </ligand>
</feature>
<feature type="binding site" evidence="1">
    <location>
        <position position="42"/>
    </location>
    <ligand>
        <name>Mg(2+)</name>
        <dbReference type="ChEBI" id="CHEBI:18420"/>
    </ligand>
</feature>
<feature type="binding site" description="in other chain" evidence="1">
    <location>
        <position position="127"/>
    </location>
    <ligand>
        <name>IMP</name>
        <dbReference type="ChEBI" id="CHEBI:58053"/>
        <note>ligand shared between dimeric partners</note>
    </ligand>
</feature>
<feature type="binding site" evidence="1">
    <location>
        <position position="141"/>
    </location>
    <ligand>
        <name>IMP</name>
        <dbReference type="ChEBI" id="CHEBI:58053"/>
        <note>ligand shared between dimeric partners</note>
    </ligand>
</feature>
<feature type="binding site" description="in other chain" evidence="1">
    <location>
        <position position="179"/>
    </location>
    <ligand>
        <name>IMP</name>
        <dbReference type="ChEBI" id="CHEBI:58053"/>
        <note>ligand shared between dimeric partners</note>
    </ligand>
</feature>
<feature type="binding site" description="in other chain" evidence="1">
    <location>
        <position position="194"/>
    </location>
    <ligand>
        <name>IMP</name>
        <dbReference type="ChEBI" id="CHEBI:58053"/>
        <note>ligand shared between dimeric partners</note>
    </ligand>
</feature>
<feature type="binding site" evidence="1">
    <location>
        <begin position="252"/>
        <end position="258"/>
    </location>
    <ligand>
        <name>substrate</name>
    </ligand>
</feature>
<feature type="binding site" description="in other chain" evidence="1">
    <location>
        <position position="256"/>
    </location>
    <ligand>
        <name>IMP</name>
        <dbReference type="ChEBI" id="CHEBI:58053"/>
        <note>ligand shared between dimeric partners</note>
    </ligand>
</feature>
<feature type="binding site" evidence="1">
    <location>
        <position position="258"/>
    </location>
    <ligand>
        <name>GTP</name>
        <dbReference type="ChEBI" id="CHEBI:37565"/>
    </ligand>
</feature>
<feature type="binding site" evidence="1">
    <location>
        <begin position="284"/>
        <end position="286"/>
    </location>
    <ligand>
        <name>GTP</name>
        <dbReference type="ChEBI" id="CHEBI:37565"/>
    </ligand>
</feature>
<feature type="binding site" evidence="1">
    <location>
        <begin position="324"/>
        <end position="326"/>
    </location>
    <ligand>
        <name>GTP</name>
        <dbReference type="ChEBI" id="CHEBI:37565"/>
    </ligand>
</feature>
<gene>
    <name evidence="1" type="primary">purA</name>
    <name type="ordered locus">MmarC6_1241</name>
</gene>
<accession>A9A9N1</accession>
<evidence type="ECO:0000255" key="1">
    <source>
        <dbReference type="HAMAP-Rule" id="MF_00011"/>
    </source>
</evidence>
<reference key="1">
    <citation type="submission" date="2007-10" db="EMBL/GenBank/DDBJ databases">
        <title>Complete sequence of Methanococcus maripaludis C6.</title>
        <authorList>
            <consortium name="US DOE Joint Genome Institute"/>
            <person name="Copeland A."/>
            <person name="Lucas S."/>
            <person name="Lapidus A."/>
            <person name="Barry K."/>
            <person name="Glavina del Rio T."/>
            <person name="Dalin E."/>
            <person name="Tice H."/>
            <person name="Pitluck S."/>
            <person name="Clum A."/>
            <person name="Schmutz J."/>
            <person name="Larimer F."/>
            <person name="Land M."/>
            <person name="Hauser L."/>
            <person name="Kyrpides N."/>
            <person name="Mikhailova N."/>
            <person name="Sieprawska-Lupa M."/>
            <person name="Whitman W.B."/>
            <person name="Richardson P."/>
        </authorList>
    </citation>
    <scope>NUCLEOTIDE SEQUENCE [LARGE SCALE GENOMIC DNA]</scope>
    <source>
        <strain>C6 / ATCC BAA-1332</strain>
    </source>
</reference>
<proteinExistence type="inferred from homology"/>
<keyword id="KW-0963">Cytoplasm</keyword>
<keyword id="KW-0342">GTP-binding</keyword>
<keyword id="KW-0436">Ligase</keyword>
<keyword id="KW-0460">Magnesium</keyword>
<keyword id="KW-0479">Metal-binding</keyword>
<keyword id="KW-0547">Nucleotide-binding</keyword>
<keyword id="KW-0658">Purine biosynthesis</keyword>
<protein>
    <recommendedName>
        <fullName evidence="1">Adenylosuccinate synthetase</fullName>
        <shortName evidence="1">AMPSase</shortName>
        <shortName evidence="1">AdSS</shortName>
        <ecNumber evidence="1">6.3.4.4</ecNumber>
    </recommendedName>
    <alternativeName>
        <fullName evidence="1">IMP--aspartate ligase</fullName>
    </alternativeName>
</protein>
<comment type="function">
    <text evidence="1">Plays an important role in the de novo pathway of purine nucleotide biosynthesis. Catalyzes the first committed step in the biosynthesis of AMP from IMP.</text>
</comment>
<comment type="catalytic activity">
    <reaction evidence="1">
        <text>IMP + L-aspartate + GTP = N(6)-(1,2-dicarboxyethyl)-AMP + GDP + phosphate + 2 H(+)</text>
        <dbReference type="Rhea" id="RHEA:15753"/>
        <dbReference type="ChEBI" id="CHEBI:15378"/>
        <dbReference type="ChEBI" id="CHEBI:29991"/>
        <dbReference type="ChEBI" id="CHEBI:37565"/>
        <dbReference type="ChEBI" id="CHEBI:43474"/>
        <dbReference type="ChEBI" id="CHEBI:57567"/>
        <dbReference type="ChEBI" id="CHEBI:58053"/>
        <dbReference type="ChEBI" id="CHEBI:58189"/>
        <dbReference type="EC" id="6.3.4.4"/>
    </reaction>
</comment>
<comment type="cofactor">
    <cofactor evidence="1">
        <name>Mg(2+)</name>
        <dbReference type="ChEBI" id="CHEBI:18420"/>
    </cofactor>
    <text evidence="1">Binds 1 Mg(2+) ion per subunit.</text>
</comment>
<comment type="pathway">
    <text evidence="1">Purine metabolism; AMP biosynthesis via de novo pathway; AMP from IMP: step 1/2.</text>
</comment>
<comment type="subunit">
    <text evidence="1">Homodimer.</text>
</comment>
<comment type="subcellular location">
    <subcellularLocation>
        <location evidence="1">Cytoplasm</location>
    </subcellularLocation>
</comment>
<comment type="similarity">
    <text evidence="1">Belongs to the adenylosuccinate synthetase family.</text>
</comment>
<organism>
    <name type="scientific">Methanococcus maripaludis (strain C6 / ATCC BAA-1332)</name>
    <dbReference type="NCBI Taxonomy" id="444158"/>
    <lineage>
        <taxon>Archaea</taxon>
        <taxon>Methanobacteriati</taxon>
        <taxon>Methanobacteriota</taxon>
        <taxon>Methanomada group</taxon>
        <taxon>Methanococci</taxon>
        <taxon>Methanococcales</taxon>
        <taxon>Methanococcaceae</taxon>
        <taxon>Methanococcus</taxon>
    </lineage>
</organism>
<dbReference type="EC" id="6.3.4.4" evidence="1"/>
<dbReference type="EMBL" id="CP000867">
    <property type="protein sequence ID" value="ABX02054.1"/>
    <property type="molecule type" value="Genomic_DNA"/>
</dbReference>
<dbReference type="SMR" id="A9A9N1"/>
<dbReference type="STRING" id="444158.MmarC6_1241"/>
<dbReference type="KEGG" id="mmx:MmarC6_1241"/>
<dbReference type="eggNOG" id="arCOG04387">
    <property type="taxonomic scope" value="Archaea"/>
</dbReference>
<dbReference type="HOGENOM" id="CLU_029848_0_0_2"/>
<dbReference type="OrthoDB" id="372247at2157"/>
<dbReference type="PhylomeDB" id="A9A9N1"/>
<dbReference type="UniPathway" id="UPA00075">
    <property type="reaction ID" value="UER00335"/>
</dbReference>
<dbReference type="GO" id="GO:0005737">
    <property type="term" value="C:cytoplasm"/>
    <property type="evidence" value="ECO:0007669"/>
    <property type="project" value="UniProtKB-SubCell"/>
</dbReference>
<dbReference type="GO" id="GO:0004019">
    <property type="term" value="F:adenylosuccinate synthase activity"/>
    <property type="evidence" value="ECO:0007669"/>
    <property type="project" value="UniProtKB-UniRule"/>
</dbReference>
<dbReference type="GO" id="GO:0005525">
    <property type="term" value="F:GTP binding"/>
    <property type="evidence" value="ECO:0007669"/>
    <property type="project" value="UniProtKB-UniRule"/>
</dbReference>
<dbReference type="GO" id="GO:0000287">
    <property type="term" value="F:magnesium ion binding"/>
    <property type="evidence" value="ECO:0007669"/>
    <property type="project" value="UniProtKB-UniRule"/>
</dbReference>
<dbReference type="GO" id="GO:0044208">
    <property type="term" value="P:'de novo' AMP biosynthetic process"/>
    <property type="evidence" value="ECO:0007669"/>
    <property type="project" value="UniProtKB-UniRule"/>
</dbReference>
<dbReference type="GO" id="GO:0046040">
    <property type="term" value="P:IMP metabolic process"/>
    <property type="evidence" value="ECO:0007669"/>
    <property type="project" value="TreeGrafter"/>
</dbReference>
<dbReference type="CDD" id="cd03108">
    <property type="entry name" value="AdSS"/>
    <property type="match status" value="1"/>
</dbReference>
<dbReference type="Gene3D" id="3.40.440.10">
    <property type="entry name" value="Adenylosuccinate Synthetase, subunit A, domain 1"/>
    <property type="match status" value="2"/>
</dbReference>
<dbReference type="Gene3D" id="3.90.170.10">
    <property type="entry name" value="Adenylosuccinate Synthetase, subunit A, domain 3"/>
    <property type="match status" value="2"/>
</dbReference>
<dbReference type="HAMAP" id="MF_00011">
    <property type="entry name" value="Adenylosucc_synth"/>
    <property type="match status" value="1"/>
</dbReference>
<dbReference type="InterPro" id="IPR018220">
    <property type="entry name" value="Adenylosuccin_syn_GTP-bd"/>
</dbReference>
<dbReference type="InterPro" id="IPR042109">
    <property type="entry name" value="Adenylosuccinate_synth_dom1"/>
</dbReference>
<dbReference type="InterPro" id="IPR042111">
    <property type="entry name" value="Adenylosuccinate_synth_dom3"/>
</dbReference>
<dbReference type="InterPro" id="IPR001114">
    <property type="entry name" value="Adenylosuccinate_synthetase"/>
</dbReference>
<dbReference type="InterPro" id="IPR027417">
    <property type="entry name" value="P-loop_NTPase"/>
</dbReference>
<dbReference type="NCBIfam" id="NF003295">
    <property type="entry name" value="PRK04293.1"/>
    <property type="match status" value="1"/>
</dbReference>
<dbReference type="PANTHER" id="PTHR11846">
    <property type="entry name" value="ADENYLOSUCCINATE SYNTHETASE"/>
    <property type="match status" value="1"/>
</dbReference>
<dbReference type="PANTHER" id="PTHR11846:SF0">
    <property type="entry name" value="ADENYLOSUCCINATE SYNTHETASE"/>
    <property type="match status" value="1"/>
</dbReference>
<dbReference type="Pfam" id="PF00709">
    <property type="entry name" value="Adenylsucc_synt"/>
    <property type="match status" value="2"/>
</dbReference>
<dbReference type="SMART" id="SM00788">
    <property type="entry name" value="Adenylsucc_synt"/>
    <property type="match status" value="1"/>
</dbReference>
<dbReference type="SUPFAM" id="SSF52540">
    <property type="entry name" value="P-loop containing nucleoside triphosphate hydrolases"/>
    <property type="match status" value="1"/>
</dbReference>
<dbReference type="PROSITE" id="PS01266">
    <property type="entry name" value="ADENYLOSUCCIN_SYN_1"/>
    <property type="match status" value="1"/>
</dbReference>
<sequence length="337" mass="36409">MTCTIVVGGQWGDEGKGKIISYLCKKDNPSIIARGGVGPNAGHTVEVDGEKYGIRMVPTGFPNVNAKLAVGAGVLTDPEVLLKEIQMLEKFNVGERMLVDYRCGIIEETHKELDKSNEHLSKEIGSTGTGCGPANVDRAMRTLKQGKDIESISKYMGDVSKAVNEALEAGDNVLIEGTQGSLLSLFYGSYPYVTSKDTNAASFAADVGVGPTKIDEVVAVFKSYPTRVGEGPFPTEMSVEEAESLGVVEYGTVTGRRRRVGYFDHELAKKVCRLNGATQIAITCLDKYDTECYGITEYEKLSEKGKAFIKEVEEKVGVKVTLISTGPELGQTIDVRK</sequence>